<proteinExistence type="evidence at protein level"/>
<protein>
    <recommendedName>
        <fullName>Probable ATP-dependent transporter SufC</fullName>
    </recommendedName>
</protein>
<dbReference type="EMBL" id="U00096">
    <property type="protein sequence ID" value="AAC74752.1"/>
    <property type="molecule type" value="Genomic_DNA"/>
</dbReference>
<dbReference type="EMBL" id="AP009048">
    <property type="protein sequence ID" value="BAA15455.1"/>
    <property type="molecule type" value="Genomic_DNA"/>
</dbReference>
<dbReference type="PIR" id="B64926">
    <property type="entry name" value="B64926"/>
</dbReference>
<dbReference type="RefSeq" id="NP_416197.1">
    <property type="nucleotide sequence ID" value="NC_000913.3"/>
</dbReference>
<dbReference type="RefSeq" id="WP_000948863.1">
    <property type="nucleotide sequence ID" value="NZ_SSZK01000001.1"/>
</dbReference>
<dbReference type="PDB" id="2D3W">
    <property type="method" value="X-ray"/>
    <property type="resolution" value="2.50 A"/>
    <property type="chains" value="A/B/C/D=1-248"/>
</dbReference>
<dbReference type="PDB" id="2ZU0">
    <property type="method" value="X-ray"/>
    <property type="resolution" value="2.20 A"/>
    <property type="chains" value="C/D=1-248"/>
</dbReference>
<dbReference type="PDB" id="5AWF">
    <property type="method" value="X-ray"/>
    <property type="resolution" value="2.96 A"/>
    <property type="chains" value="C/D/G/H=1-248"/>
</dbReference>
<dbReference type="PDB" id="5AWG">
    <property type="method" value="X-ray"/>
    <property type="resolution" value="4.28 A"/>
    <property type="chains" value="C/D/G/H=1-248"/>
</dbReference>
<dbReference type="PDBsum" id="2D3W"/>
<dbReference type="PDBsum" id="2ZU0"/>
<dbReference type="PDBsum" id="5AWF"/>
<dbReference type="PDBsum" id="5AWG"/>
<dbReference type="SMR" id="P77499"/>
<dbReference type="BioGRID" id="4260279">
    <property type="interactions" value="80"/>
</dbReference>
<dbReference type="BioGRID" id="850488">
    <property type="interactions" value="2"/>
</dbReference>
<dbReference type="ComplexPortal" id="CPX-2123">
    <property type="entry name" value="sufBCD complex"/>
</dbReference>
<dbReference type="DIP" id="DIP-10939N"/>
<dbReference type="FunCoup" id="P77499">
    <property type="interactions" value="675"/>
</dbReference>
<dbReference type="IntAct" id="P77499">
    <property type="interactions" value="16"/>
</dbReference>
<dbReference type="MINT" id="P77499"/>
<dbReference type="STRING" id="511145.b1682"/>
<dbReference type="jPOST" id="P77499"/>
<dbReference type="PaxDb" id="511145-b1682"/>
<dbReference type="EnsemblBacteria" id="AAC74752">
    <property type="protein sequence ID" value="AAC74752"/>
    <property type="gene ID" value="b1682"/>
</dbReference>
<dbReference type="GeneID" id="946128"/>
<dbReference type="KEGG" id="ecj:JW1672"/>
<dbReference type="KEGG" id="eco:b1682"/>
<dbReference type="KEGG" id="ecoc:C3026_09635"/>
<dbReference type="PATRIC" id="fig|1411691.4.peg.576"/>
<dbReference type="EchoBASE" id="EB3722"/>
<dbReference type="eggNOG" id="COG0396">
    <property type="taxonomic scope" value="Bacteria"/>
</dbReference>
<dbReference type="HOGENOM" id="CLU_000604_48_1_6"/>
<dbReference type="InParanoid" id="P77499"/>
<dbReference type="OMA" id="MAMLEPK"/>
<dbReference type="OrthoDB" id="9806149at2"/>
<dbReference type="PhylomeDB" id="P77499"/>
<dbReference type="BioCyc" id="EcoCyc:G6908-MONOMER"/>
<dbReference type="EvolutionaryTrace" id="P77499"/>
<dbReference type="PRO" id="PR:P77499"/>
<dbReference type="Proteomes" id="UP000000625">
    <property type="component" value="Chromosome"/>
</dbReference>
<dbReference type="GO" id="GO:0005829">
    <property type="term" value="C:cytosol"/>
    <property type="evidence" value="ECO:0000314"/>
    <property type="project" value="EcoCyc"/>
</dbReference>
<dbReference type="GO" id="GO:1990229">
    <property type="term" value="C:iron-sulfur cluster assembly complex"/>
    <property type="evidence" value="ECO:0000314"/>
    <property type="project" value="EcoCyc"/>
</dbReference>
<dbReference type="GO" id="GO:0005524">
    <property type="term" value="F:ATP binding"/>
    <property type="evidence" value="ECO:0007669"/>
    <property type="project" value="UniProtKB-KW"/>
</dbReference>
<dbReference type="GO" id="GO:0016887">
    <property type="term" value="F:ATP hydrolysis activity"/>
    <property type="evidence" value="ECO:0007669"/>
    <property type="project" value="InterPro"/>
</dbReference>
<dbReference type="GO" id="GO:0016226">
    <property type="term" value="P:iron-sulfur cluster assembly"/>
    <property type="evidence" value="ECO:0000315"/>
    <property type="project" value="EcoCyc"/>
</dbReference>
<dbReference type="GO" id="GO:0009314">
    <property type="term" value="P:response to radiation"/>
    <property type="evidence" value="ECO:0000315"/>
    <property type="project" value="EcoCyc"/>
</dbReference>
<dbReference type="CDD" id="cd03217">
    <property type="entry name" value="ABC_FeS_Assembly"/>
    <property type="match status" value="1"/>
</dbReference>
<dbReference type="FunFam" id="3.40.50.300:FF:000405">
    <property type="entry name" value="Fe-S cluster assembly ATPase SufC"/>
    <property type="match status" value="1"/>
</dbReference>
<dbReference type="Gene3D" id="3.40.50.300">
    <property type="entry name" value="P-loop containing nucleotide triphosphate hydrolases"/>
    <property type="match status" value="1"/>
</dbReference>
<dbReference type="InterPro" id="IPR003593">
    <property type="entry name" value="AAA+_ATPase"/>
</dbReference>
<dbReference type="InterPro" id="IPR003439">
    <property type="entry name" value="ABC_transporter-like_ATP-bd"/>
</dbReference>
<dbReference type="InterPro" id="IPR017871">
    <property type="entry name" value="ABC_transporter-like_CS"/>
</dbReference>
<dbReference type="InterPro" id="IPR010230">
    <property type="entry name" value="FeS-cluster_ATPase_SufC"/>
</dbReference>
<dbReference type="InterPro" id="IPR027417">
    <property type="entry name" value="P-loop_NTPase"/>
</dbReference>
<dbReference type="NCBIfam" id="NF007134">
    <property type="entry name" value="PRK09580.1"/>
    <property type="match status" value="1"/>
</dbReference>
<dbReference type="NCBIfam" id="TIGR01978">
    <property type="entry name" value="sufC"/>
    <property type="match status" value="1"/>
</dbReference>
<dbReference type="PANTHER" id="PTHR43204">
    <property type="entry name" value="ABC TRANSPORTER I FAMILY MEMBER 6, CHLOROPLASTIC"/>
    <property type="match status" value="1"/>
</dbReference>
<dbReference type="PANTHER" id="PTHR43204:SF1">
    <property type="entry name" value="ABC TRANSPORTER I FAMILY MEMBER 6, CHLOROPLASTIC"/>
    <property type="match status" value="1"/>
</dbReference>
<dbReference type="Pfam" id="PF00005">
    <property type="entry name" value="ABC_tran"/>
    <property type="match status" value="1"/>
</dbReference>
<dbReference type="SMART" id="SM00382">
    <property type="entry name" value="AAA"/>
    <property type="match status" value="1"/>
</dbReference>
<dbReference type="SUPFAM" id="SSF52540">
    <property type="entry name" value="P-loop containing nucleoside triphosphate hydrolases"/>
    <property type="match status" value="1"/>
</dbReference>
<dbReference type="PROSITE" id="PS00211">
    <property type="entry name" value="ABC_TRANSPORTER_1"/>
    <property type="match status" value="1"/>
</dbReference>
<dbReference type="PROSITE" id="PS50893">
    <property type="entry name" value="ABC_TRANSPORTER_2"/>
    <property type="match status" value="1"/>
</dbReference>
<feature type="chain" id="PRO_0000092980" description="Probable ATP-dependent transporter SufC">
    <location>
        <begin position="1"/>
        <end position="248"/>
    </location>
</feature>
<feature type="domain" description="ABC transporter" evidence="1">
    <location>
        <begin position="2"/>
        <end position="246"/>
    </location>
</feature>
<feature type="binding site" evidence="1">
    <location>
        <begin position="34"/>
        <end position="41"/>
    </location>
    <ligand>
        <name>ATP</name>
        <dbReference type="ChEBI" id="CHEBI:30616"/>
    </ligand>
</feature>
<feature type="strand" evidence="7">
    <location>
        <begin position="2"/>
        <end position="11"/>
    </location>
</feature>
<feature type="strand" evidence="7">
    <location>
        <begin position="14"/>
        <end position="24"/>
    </location>
</feature>
<feature type="strand" evidence="7">
    <location>
        <begin position="29"/>
        <end position="33"/>
    </location>
</feature>
<feature type="helix" evidence="7">
    <location>
        <begin position="40"/>
        <end position="48"/>
    </location>
</feature>
<feature type="strand" evidence="7">
    <location>
        <begin position="54"/>
        <end position="62"/>
    </location>
</feature>
<feature type="helix" evidence="7">
    <location>
        <begin position="67"/>
        <end position="69"/>
    </location>
</feature>
<feature type="helix" evidence="7">
    <location>
        <begin position="72"/>
        <end position="78"/>
    </location>
</feature>
<feature type="strand" evidence="7">
    <location>
        <begin position="80"/>
        <end position="83"/>
    </location>
</feature>
<feature type="strand" evidence="6">
    <location>
        <begin position="88"/>
        <end position="90"/>
    </location>
</feature>
<feature type="helix" evidence="7">
    <location>
        <begin position="95"/>
        <end position="108"/>
    </location>
</feature>
<feature type="helix" evidence="7">
    <location>
        <begin position="109"/>
        <end position="111"/>
    </location>
</feature>
<feature type="helix" evidence="7">
    <location>
        <begin position="117"/>
        <end position="130"/>
    </location>
</feature>
<feature type="turn" evidence="7">
    <location>
        <begin position="135"/>
        <end position="139"/>
    </location>
</feature>
<feature type="turn" evidence="7">
    <location>
        <begin position="142"/>
        <end position="145"/>
    </location>
</feature>
<feature type="helix" evidence="7">
    <location>
        <begin position="148"/>
        <end position="162"/>
    </location>
</feature>
<feature type="strand" evidence="7">
    <location>
        <begin position="165"/>
        <end position="171"/>
    </location>
</feature>
<feature type="turn" evidence="7">
    <location>
        <begin position="172"/>
        <end position="175"/>
    </location>
</feature>
<feature type="helix" evidence="7">
    <location>
        <begin position="178"/>
        <end position="189"/>
    </location>
</feature>
<feature type="strand" evidence="7">
    <location>
        <begin position="197"/>
        <end position="201"/>
    </location>
</feature>
<feature type="helix" evidence="7">
    <location>
        <begin position="205"/>
        <end position="209"/>
    </location>
</feature>
<feature type="strand" evidence="7">
    <location>
        <begin position="214"/>
        <end position="220"/>
    </location>
</feature>
<feature type="strand" evidence="7">
    <location>
        <begin position="223"/>
        <end position="228"/>
    </location>
</feature>
<feature type="helix" evidence="7">
    <location>
        <begin position="232"/>
        <end position="237"/>
    </location>
</feature>
<feature type="turn" evidence="7">
    <location>
        <begin position="238"/>
        <end position="240"/>
    </location>
</feature>
<accession>P77499</accession>
<comment type="function">
    <text evidence="2 3 4">Has low ATPase activity. The SufBCD complex acts synergistically with SufE to stimulate the cysteine desulfurase activity of SufS. The SufBCD complex contributes to the assembly or repair of oxygen-labile iron-sulfur clusters under oxidative stress. May facilitate iron uptake from extracellular iron chelators under iron limitation.</text>
</comment>
<comment type="biophysicochemical properties">
    <kinetics>
        <KM evidence="2">0.29 mM for ATP</KM>
        <Vmax evidence="2">4.45 umol/min/mg enzyme</Vmax>
    </kinetics>
</comment>
<comment type="subunit">
    <text evidence="2 3 4">Part of the SufBCD complex that contains SufB, SufC and SufD. Interacts directly with SufB and SufD. Interacts with SufA (PubMed:19810706).</text>
</comment>
<comment type="interaction">
    <interactant intactId="EBI-561601">
        <id>P77499</id>
    </interactant>
    <interactant intactId="EBI-1125011">
        <id>P77667</id>
        <label>sufA</label>
    </interactant>
    <organismsDiffer>false</organismsDiffer>
    <experiments>5</experiments>
</comment>
<comment type="interaction">
    <interactant intactId="EBI-561601">
        <id>P77499</id>
    </interactant>
    <interactant intactId="EBI-562758">
        <id>P77522</id>
        <label>sufB</label>
    </interactant>
    <organismsDiffer>false</organismsDiffer>
    <experiments>15</experiments>
</comment>
<comment type="interaction">
    <interactant intactId="EBI-561601">
        <id>P77499</id>
    </interactant>
    <interactant intactId="EBI-562751">
        <id>P77689</id>
        <label>sufD</label>
    </interactant>
    <organismsDiffer>false</organismsDiffer>
    <experiments>9</experiments>
</comment>
<comment type="subcellular location">
    <subcellularLocation>
        <location evidence="2">Cytoplasm</location>
    </subcellularLocation>
</comment>
<comment type="similarity">
    <text evidence="5">Belongs to the ABC transporter superfamily. Ycf16 family.</text>
</comment>
<gene>
    <name type="primary">sufC</name>
    <name type="synonym">ynhD</name>
    <name type="ordered locus">b1682</name>
    <name type="ordered locus">JW1672</name>
</gene>
<evidence type="ECO:0000255" key="1">
    <source>
        <dbReference type="PROSITE-ProRule" id="PRU00434"/>
    </source>
</evidence>
<evidence type="ECO:0000269" key="2">
    <source>
    </source>
</evidence>
<evidence type="ECO:0000269" key="3">
    <source>
    </source>
</evidence>
<evidence type="ECO:0000269" key="4">
    <source>
    </source>
</evidence>
<evidence type="ECO:0000305" key="5"/>
<evidence type="ECO:0007829" key="6">
    <source>
        <dbReference type="PDB" id="2D3W"/>
    </source>
</evidence>
<evidence type="ECO:0007829" key="7">
    <source>
        <dbReference type="PDB" id="2ZU0"/>
    </source>
</evidence>
<keyword id="KW-0002">3D-structure</keyword>
<keyword id="KW-0067">ATP-binding</keyword>
<keyword id="KW-0963">Cytoplasm</keyword>
<keyword id="KW-0547">Nucleotide-binding</keyword>
<keyword id="KW-1185">Reference proteome</keyword>
<keyword id="KW-0813">Transport</keyword>
<organism>
    <name type="scientific">Escherichia coli (strain K12)</name>
    <dbReference type="NCBI Taxonomy" id="83333"/>
    <lineage>
        <taxon>Bacteria</taxon>
        <taxon>Pseudomonadati</taxon>
        <taxon>Pseudomonadota</taxon>
        <taxon>Gammaproteobacteria</taxon>
        <taxon>Enterobacterales</taxon>
        <taxon>Enterobacteriaceae</taxon>
        <taxon>Escherichia</taxon>
    </lineage>
</organism>
<name>SUFC_ECOLI</name>
<sequence>MLSIKDLHVSVEDKAILRGLSLDVHPGEVHAIMGPNGSGKSTLSATLAGREDYEVTGGTVEFKGKDLLALSPEDRAGEGIFMAFQYPVEIPGVSNQFFLQTALNAVRSYRGQETLDRFDFQDLMEEKIALLKMPEDLLTRSVNVGFSGGEKKRNDILQMAVLEPELCILDESDSGLDIDALKVVADGVNSLRDGKRSFIIVTHYQRILDYIKPDYVHVLYQGRIVKSGDFTLVKQLEEQGYGWLTEQQ</sequence>
<reference key="1">
    <citation type="journal article" date="1996" name="DNA Res.">
        <title>A 570-kb DNA sequence of the Escherichia coli K-12 genome corresponding to the 28.0-40.1 min region on the linkage map.</title>
        <authorList>
            <person name="Aiba H."/>
            <person name="Baba T."/>
            <person name="Fujita K."/>
            <person name="Hayashi K."/>
            <person name="Inada T."/>
            <person name="Isono K."/>
            <person name="Itoh T."/>
            <person name="Kasai H."/>
            <person name="Kashimoto K."/>
            <person name="Kimura S."/>
            <person name="Kitakawa M."/>
            <person name="Kitagawa M."/>
            <person name="Makino K."/>
            <person name="Miki T."/>
            <person name="Mizobuchi K."/>
            <person name="Mori H."/>
            <person name="Mori T."/>
            <person name="Motomura K."/>
            <person name="Nakade S."/>
            <person name="Nakamura Y."/>
            <person name="Nashimoto H."/>
            <person name="Nishio Y."/>
            <person name="Oshima T."/>
            <person name="Saito N."/>
            <person name="Sampei G."/>
            <person name="Seki Y."/>
            <person name="Sivasundaram S."/>
            <person name="Tagami H."/>
            <person name="Takeda J."/>
            <person name="Takemoto K."/>
            <person name="Takeuchi Y."/>
            <person name="Wada C."/>
            <person name="Yamamoto Y."/>
            <person name="Horiuchi T."/>
        </authorList>
    </citation>
    <scope>NUCLEOTIDE SEQUENCE [LARGE SCALE GENOMIC DNA]</scope>
    <source>
        <strain>K12 / W3110 / ATCC 27325 / DSM 5911</strain>
    </source>
</reference>
<reference key="2">
    <citation type="journal article" date="1997" name="Science">
        <title>The complete genome sequence of Escherichia coli K-12.</title>
        <authorList>
            <person name="Blattner F.R."/>
            <person name="Plunkett G. III"/>
            <person name="Bloch C.A."/>
            <person name="Perna N.T."/>
            <person name="Burland V."/>
            <person name="Riley M."/>
            <person name="Collado-Vides J."/>
            <person name="Glasner J.D."/>
            <person name="Rode C.K."/>
            <person name="Mayhew G.F."/>
            <person name="Gregor J."/>
            <person name="Davis N.W."/>
            <person name="Kirkpatrick H.A."/>
            <person name="Goeden M.A."/>
            <person name="Rose D.J."/>
            <person name="Mau B."/>
            <person name="Shao Y."/>
        </authorList>
    </citation>
    <scope>NUCLEOTIDE SEQUENCE [LARGE SCALE GENOMIC DNA]</scope>
    <source>
        <strain>K12 / MG1655 / ATCC 47076</strain>
    </source>
</reference>
<reference key="3">
    <citation type="journal article" date="2006" name="Mol. Syst. Biol.">
        <title>Highly accurate genome sequences of Escherichia coli K-12 strains MG1655 and W3110.</title>
        <authorList>
            <person name="Hayashi K."/>
            <person name="Morooka N."/>
            <person name="Yamamoto Y."/>
            <person name="Fujita K."/>
            <person name="Isono K."/>
            <person name="Choi S."/>
            <person name="Ohtsubo E."/>
            <person name="Baba T."/>
            <person name="Wanner B.L."/>
            <person name="Mori H."/>
            <person name="Horiuchi T."/>
        </authorList>
    </citation>
    <scope>NUCLEOTIDE SEQUENCE [LARGE SCALE GENOMIC DNA]</scope>
    <source>
        <strain>K12 / W3110 / ATCC 27325 / DSM 5911</strain>
    </source>
</reference>
<reference key="4">
    <citation type="journal article" date="1999" name="J. Bacteriol.">
        <title>SufS is a NifS-like protein, and SufD is necessary for stability of the 2Fe-2S FhuF protein in Escherichia coli.</title>
        <authorList>
            <person name="Patzer S.I."/>
            <person name="Hantke K."/>
        </authorList>
    </citation>
    <scope>GENE NAME</scope>
    <source>
        <strain>K12 / MG1655 / ATCC 47076</strain>
    </source>
</reference>
<reference key="5">
    <citation type="journal article" date="2003" name="EMBO J.">
        <title>SufC: an unorthodox cytoplasmic ABC/ATPase required for [Fe-S] biogenesis under oxidative stress.</title>
        <authorList>
            <person name="Nachin L."/>
            <person name="Loiseau L."/>
            <person name="Expert D."/>
            <person name="Barras F."/>
        </authorList>
    </citation>
    <scope>FUNCTION</scope>
    <scope>IDENTIFICATION BY MASS SPECTROMETRY</scope>
    <scope>SUBUNIT</scope>
    <scope>BIOPHYSICOCHEMICAL PROPERTIES</scope>
    <scope>SUBCELLULAR LOCATION</scope>
</reference>
<reference key="6">
    <citation type="journal article" date="2003" name="J. Biol. Chem.">
        <title>The SufE protein and the SufBCD complex enhance SufS cysteine desulfurase activity as part of a sulfur transfer pathway for Fe-S cluster assembly in Escherichia coli.</title>
        <authorList>
            <person name="Outten F.W."/>
            <person name="Wood M.J."/>
            <person name="Munoz F.M."/>
            <person name="Storz G."/>
        </authorList>
    </citation>
    <scope>FUNCTION</scope>
    <scope>SUBUNIT</scope>
</reference>
<reference key="7">
    <citation type="journal article" date="2009" name="Biochemistry">
        <title>The SufBCD Fe-S scaffold complex interacts with SufA for Fe-S cluster transfer.</title>
        <authorList>
            <person name="Chahal H.K."/>
            <person name="Dai Y."/>
            <person name="Saini A."/>
            <person name="Ayala-Castro C."/>
            <person name="Outten F.W."/>
        </authorList>
    </citation>
    <scope>FUNCTION</scope>
    <scope>INTERACTION WITH SUFA</scope>
</reference>
<reference key="8">
    <citation type="journal article" date="2006" name="FEBS Lett.">
        <title>Crystal structure of Escherichia coli SufC, an ABC-type ATPase component of the SUF iron-sulfur cluster assembly machinery.</title>
        <authorList>
            <person name="Kitaoka S."/>
            <person name="Wada K."/>
            <person name="Hasegawa Y."/>
            <person name="Minami Y."/>
            <person name="Fukuyama K."/>
            <person name="Takahashi Y."/>
        </authorList>
    </citation>
    <scope>X-RAY CRYSTALLOGRAPHY (2.5 ANGSTROMS)</scope>
</reference>